<name>NAC87_ARATH</name>
<protein>
    <recommendedName>
        <fullName evidence="3">NAC domain-containing protein 87</fullName>
        <shortName evidence="3">ANAC087</shortName>
    </recommendedName>
</protein>
<organism>
    <name type="scientific">Arabidopsis thaliana</name>
    <name type="common">Mouse-ear cress</name>
    <dbReference type="NCBI Taxonomy" id="3702"/>
    <lineage>
        <taxon>Eukaryota</taxon>
        <taxon>Viridiplantae</taxon>
        <taxon>Streptophyta</taxon>
        <taxon>Embryophyta</taxon>
        <taxon>Tracheophyta</taxon>
        <taxon>Spermatophyta</taxon>
        <taxon>Magnoliopsida</taxon>
        <taxon>eudicotyledons</taxon>
        <taxon>Gunneridae</taxon>
        <taxon>Pentapetalae</taxon>
        <taxon>rosids</taxon>
        <taxon>malvids</taxon>
        <taxon>Brassicales</taxon>
        <taxon>Brassicaceae</taxon>
        <taxon>Camelineae</taxon>
        <taxon>Arabidopsis</taxon>
    </lineage>
</organism>
<dbReference type="EMBL" id="AB012246">
    <property type="protein sequence ID" value="BAB09485.1"/>
    <property type="molecule type" value="Genomic_DNA"/>
</dbReference>
<dbReference type="EMBL" id="CP002688">
    <property type="protein sequence ID" value="AED92530.1"/>
    <property type="molecule type" value="Genomic_DNA"/>
</dbReference>
<dbReference type="EMBL" id="BT005713">
    <property type="protein sequence ID" value="AAO64133.1"/>
    <property type="molecule type" value="mRNA"/>
</dbReference>
<dbReference type="EMBL" id="BT006070">
    <property type="protein sequence ID" value="AAP04055.1"/>
    <property type="molecule type" value="mRNA"/>
</dbReference>
<dbReference type="EMBL" id="AK228369">
    <property type="protein sequence ID" value="BAF00308.1"/>
    <property type="molecule type" value="mRNA"/>
</dbReference>
<dbReference type="SMR" id="Q9FK44"/>
<dbReference type="FunCoup" id="Q9FK44">
    <property type="interactions" value="190"/>
</dbReference>
<dbReference type="STRING" id="3702.Q9FK44"/>
<dbReference type="PaxDb" id="3702-AT5G18270.1"/>
<dbReference type="ProteomicsDB" id="251041"/>
<dbReference type="EnsemblPlants" id="AT5G18270.1">
    <property type="protein sequence ID" value="AT5G18270.1"/>
    <property type="gene ID" value="AT5G18270"/>
</dbReference>
<dbReference type="GeneID" id="831945"/>
<dbReference type="Gramene" id="AT5G18270.1">
    <property type="protein sequence ID" value="AT5G18270.1"/>
    <property type="gene ID" value="AT5G18270"/>
</dbReference>
<dbReference type="KEGG" id="ath:AT5G18270"/>
<dbReference type="Araport" id="AT5G18270"/>
<dbReference type="TAIR" id="AT5G18270">
    <property type="gene designation" value="ANAC087"/>
</dbReference>
<dbReference type="eggNOG" id="ENOG502QSPY">
    <property type="taxonomic scope" value="Eukaryota"/>
</dbReference>
<dbReference type="InParanoid" id="Q9FK44"/>
<dbReference type="OrthoDB" id="1424968at2759"/>
<dbReference type="PhylomeDB" id="Q9FK44"/>
<dbReference type="PRO" id="PR:Q9FK44"/>
<dbReference type="Proteomes" id="UP000006548">
    <property type="component" value="Chromosome 5"/>
</dbReference>
<dbReference type="ExpressionAtlas" id="Q9FK44">
    <property type="expression patterns" value="baseline and differential"/>
</dbReference>
<dbReference type="GO" id="GO:0005737">
    <property type="term" value="C:cytoplasm"/>
    <property type="evidence" value="ECO:0000314"/>
    <property type="project" value="TAIR"/>
</dbReference>
<dbReference type="GO" id="GO:0005634">
    <property type="term" value="C:nucleus"/>
    <property type="evidence" value="ECO:0000314"/>
    <property type="project" value="TAIR"/>
</dbReference>
<dbReference type="GO" id="GO:0003700">
    <property type="term" value="F:DNA-binding transcription factor activity"/>
    <property type="evidence" value="ECO:0000250"/>
    <property type="project" value="TAIR"/>
</dbReference>
<dbReference type="GO" id="GO:0000976">
    <property type="term" value="F:transcription cis-regulatory region binding"/>
    <property type="evidence" value="ECO:0000353"/>
    <property type="project" value="TAIR"/>
</dbReference>
<dbReference type="FunFam" id="2.170.150.80:FF:000006">
    <property type="entry name" value="NAC domain-containing protein 100-like"/>
    <property type="match status" value="1"/>
</dbReference>
<dbReference type="Gene3D" id="2.170.150.80">
    <property type="entry name" value="NAC domain"/>
    <property type="match status" value="1"/>
</dbReference>
<dbReference type="InterPro" id="IPR003441">
    <property type="entry name" value="NAC-dom"/>
</dbReference>
<dbReference type="InterPro" id="IPR036093">
    <property type="entry name" value="NAC_dom_sf"/>
</dbReference>
<dbReference type="PANTHER" id="PTHR31744:SF92">
    <property type="entry name" value="NAC DOMAIN-CONTAINING PROTEIN 87"/>
    <property type="match status" value="1"/>
</dbReference>
<dbReference type="PANTHER" id="PTHR31744">
    <property type="entry name" value="PROTEIN CUP-SHAPED COTYLEDON 2-RELATED"/>
    <property type="match status" value="1"/>
</dbReference>
<dbReference type="Pfam" id="PF02365">
    <property type="entry name" value="NAM"/>
    <property type="match status" value="1"/>
</dbReference>
<dbReference type="SUPFAM" id="SSF101941">
    <property type="entry name" value="NAC domain"/>
    <property type="match status" value="1"/>
</dbReference>
<dbReference type="PROSITE" id="PS51005">
    <property type="entry name" value="NAC"/>
    <property type="match status" value="1"/>
</dbReference>
<sequence>MAVVVEEGVVLNHGGEELVDLPPGFRFHPTDEEIITCYLKEKVLNSRFTAVAMGEADLNKCEPWDLPKRAKMGEKEFYFFCQRDRKYPTGMRTNRATESGYWKATGKDKEIFKGKGCLVGMKKTLVFYRGRAPKGEKTNWVMHEYRLEGKYSYYNLPKSARDEWVVCRVFHKNNPSTTTQPMTRIPVEDFTRMDSLENIDHLLDFSSLPPLIDPSFMSQTEQPNFKPINPPTYDISSPIQPHHFNSYQSIFNHQVFGSASGSTYNNNNEMIKMEQSLVSVSQETCLSSDVNANMTTTTEVSSGPVMKQEMGMMGMVNGSKSYEDLCDLRGDLWDF</sequence>
<gene>
    <name evidence="5" type="primary">NAC087</name>
    <name evidence="4" type="ordered locus">At5g18270</name>
    <name evidence="6" type="ORF">MRG7.23</name>
</gene>
<reference key="1">
    <citation type="journal article" date="1998" name="DNA Res.">
        <title>Structural analysis of Arabidopsis thaliana chromosome 5. VI. Sequence features of the regions of 1,367,185 bp covered by 19 physically assigned P1 and TAC clones.</title>
        <authorList>
            <person name="Kotani H."/>
            <person name="Nakamura Y."/>
            <person name="Sato S."/>
            <person name="Asamizu E."/>
            <person name="Kaneko T."/>
            <person name="Miyajima N."/>
            <person name="Tabata S."/>
        </authorList>
    </citation>
    <scope>NUCLEOTIDE SEQUENCE [LARGE SCALE GENOMIC DNA]</scope>
    <source>
        <strain>cv. Columbia</strain>
    </source>
</reference>
<reference key="2">
    <citation type="journal article" date="2017" name="Plant J.">
        <title>Araport11: a complete reannotation of the Arabidopsis thaliana reference genome.</title>
        <authorList>
            <person name="Cheng C.Y."/>
            <person name="Krishnakumar V."/>
            <person name="Chan A.P."/>
            <person name="Thibaud-Nissen F."/>
            <person name="Schobel S."/>
            <person name="Town C.D."/>
        </authorList>
    </citation>
    <scope>GENOME REANNOTATION</scope>
    <source>
        <strain>cv. Columbia</strain>
    </source>
</reference>
<reference key="3">
    <citation type="journal article" date="2003" name="Science">
        <title>Empirical analysis of transcriptional activity in the Arabidopsis genome.</title>
        <authorList>
            <person name="Yamada K."/>
            <person name="Lim J."/>
            <person name="Dale J.M."/>
            <person name="Chen H."/>
            <person name="Shinn P."/>
            <person name="Palm C.J."/>
            <person name="Southwick A.M."/>
            <person name="Wu H.C."/>
            <person name="Kim C.J."/>
            <person name="Nguyen M."/>
            <person name="Pham P.K."/>
            <person name="Cheuk R.F."/>
            <person name="Karlin-Newmann G."/>
            <person name="Liu S.X."/>
            <person name="Lam B."/>
            <person name="Sakano H."/>
            <person name="Wu T."/>
            <person name="Yu G."/>
            <person name="Miranda M."/>
            <person name="Quach H.L."/>
            <person name="Tripp M."/>
            <person name="Chang C.H."/>
            <person name="Lee J.M."/>
            <person name="Toriumi M.J."/>
            <person name="Chan M.M."/>
            <person name="Tang C.C."/>
            <person name="Onodera C.S."/>
            <person name="Deng J.M."/>
            <person name="Akiyama K."/>
            <person name="Ansari Y."/>
            <person name="Arakawa T."/>
            <person name="Banh J."/>
            <person name="Banno F."/>
            <person name="Bowser L."/>
            <person name="Brooks S.Y."/>
            <person name="Carninci P."/>
            <person name="Chao Q."/>
            <person name="Choy N."/>
            <person name="Enju A."/>
            <person name="Goldsmith A.D."/>
            <person name="Gurjal M."/>
            <person name="Hansen N.F."/>
            <person name="Hayashizaki Y."/>
            <person name="Johnson-Hopson C."/>
            <person name="Hsuan V.W."/>
            <person name="Iida K."/>
            <person name="Karnes M."/>
            <person name="Khan S."/>
            <person name="Koesema E."/>
            <person name="Ishida J."/>
            <person name="Jiang P.X."/>
            <person name="Jones T."/>
            <person name="Kawai J."/>
            <person name="Kamiya A."/>
            <person name="Meyers C."/>
            <person name="Nakajima M."/>
            <person name="Narusaka M."/>
            <person name="Seki M."/>
            <person name="Sakurai T."/>
            <person name="Satou M."/>
            <person name="Tamse R."/>
            <person name="Vaysberg M."/>
            <person name="Wallender E.K."/>
            <person name="Wong C."/>
            <person name="Yamamura Y."/>
            <person name="Yuan S."/>
            <person name="Shinozaki K."/>
            <person name="Davis R.W."/>
            <person name="Theologis A."/>
            <person name="Ecker J.R."/>
        </authorList>
    </citation>
    <scope>NUCLEOTIDE SEQUENCE [LARGE SCALE MRNA]</scope>
    <source>
        <strain>cv. Columbia</strain>
    </source>
</reference>
<reference key="4">
    <citation type="submission" date="2006-07" db="EMBL/GenBank/DDBJ databases">
        <title>Large-scale analysis of RIKEN Arabidopsis full-length (RAFL) cDNAs.</title>
        <authorList>
            <person name="Totoki Y."/>
            <person name="Seki M."/>
            <person name="Ishida J."/>
            <person name="Nakajima M."/>
            <person name="Enju A."/>
            <person name="Kamiya A."/>
            <person name="Narusaka M."/>
            <person name="Shin-i T."/>
            <person name="Nakagawa M."/>
            <person name="Sakamoto N."/>
            <person name="Oishi K."/>
            <person name="Kohara Y."/>
            <person name="Kobayashi M."/>
            <person name="Toyoda A."/>
            <person name="Sakaki Y."/>
            <person name="Sakurai T."/>
            <person name="Iida K."/>
            <person name="Akiyama K."/>
            <person name="Satou M."/>
            <person name="Toyoda T."/>
            <person name="Konagaya A."/>
            <person name="Carninci P."/>
            <person name="Kawai J."/>
            <person name="Hayashizaki Y."/>
            <person name="Shinozaki K."/>
        </authorList>
    </citation>
    <scope>NUCLEOTIDE SEQUENCE [LARGE SCALE MRNA]</scope>
    <source>
        <strain>cv. Columbia</strain>
    </source>
</reference>
<reference key="5">
    <citation type="journal article" date="2003" name="DNA Res.">
        <title>Comprehensive analysis of NAC family genes in Oryza sativa and Arabidopsis thaliana.</title>
        <authorList>
            <person name="Ooka H."/>
            <person name="Satoh K."/>
            <person name="Doi K."/>
            <person name="Nagata T."/>
            <person name="Otomo Y."/>
            <person name="Murakami K."/>
            <person name="Matsubara K."/>
            <person name="Osato N."/>
            <person name="Kawai J."/>
            <person name="Carninci P."/>
            <person name="Hayashizaki Y."/>
            <person name="Suzuki K."/>
            <person name="Kojima K."/>
            <person name="Takahara Y."/>
            <person name="Yamamoto K."/>
            <person name="Kikuchi S."/>
        </authorList>
    </citation>
    <scope>GENE FAMILY</scope>
    <scope>NOMENCLATURE</scope>
</reference>
<reference key="6">
    <citation type="journal article" date="2016" name="Sci. Rep.">
        <title>The NAC transcription factor ANAC046 is a positive regulator of chlorophyll degradation and senescence in Arabidopsis leaves.</title>
        <authorList>
            <person name="Oda-Yamamizo C."/>
            <person name="Mitsuda N."/>
            <person name="Sakamoto S."/>
            <person name="Ogawa D."/>
            <person name="Ohme-Takagi M."/>
            <person name="Ohmiya A."/>
        </authorList>
    </citation>
    <scope>FUNCTION</scope>
</reference>
<accession>Q9FK44</accession>
<evidence type="ECO:0000255" key="1">
    <source>
        <dbReference type="PROSITE-ProRule" id="PRU00353"/>
    </source>
</evidence>
<evidence type="ECO:0000269" key="2">
    <source>
    </source>
</evidence>
<evidence type="ECO:0000303" key="3">
    <source>
    </source>
</evidence>
<evidence type="ECO:0000312" key="4">
    <source>
        <dbReference type="Araport" id="AT5G18270"/>
    </source>
</evidence>
<evidence type="ECO:0000312" key="5">
    <source>
        <dbReference type="EMBL" id="AED92530.1"/>
    </source>
</evidence>
<evidence type="ECO:0000312" key="6">
    <source>
        <dbReference type="EMBL" id="BAB09485.1"/>
    </source>
</evidence>
<keyword id="KW-0238">DNA-binding</keyword>
<keyword id="KW-0539">Nucleus</keyword>
<keyword id="KW-1185">Reference proteome</keyword>
<keyword id="KW-0804">Transcription</keyword>
<keyword id="KW-0805">Transcription regulation</keyword>
<comment type="function">
    <text evidence="2">Binds to the promoter regions of genes involved in chlorophyll catabolic processes, such as NYC1, SGR1, SGR2 and PAO.</text>
</comment>
<comment type="subcellular location">
    <subcellularLocation>
        <location evidence="1">Nucleus</location>
    </subcellularLocation>
</comment>
<comment type="domain">
    <text evidence="1">The NAC domain includes a DNA binding domain and a dimerization domain.</text>
</comment>
<feature type="chain" id="PRO_0000442493" description="NAC domain-containing protein 87">
    <location>
        <begin position="1"/>
        <end position="335"/>
    </location>
</feature>
<feature type="domain" description="NAC" evidence="1">
    <location>
        <begin position="21"/>
        <end position="172"/>
    </location>
</feature>
<feature type="DNA-binding region" evidence="1">
    <location>
        <begin position="119"/>
        <end position="178"/>
    </location>
</feature>
<proteinExistence type="evidence at transcript level"/>